<reference key="1">
    <citation type="journal article" date="2006" name="Proc. Natl. Acad. Sci. U.S.A.">
        <title>Molecular genetic anatomy of inter- and intraserotype variation in the human bacterial pathogen group A Streptococcus.</title>
        <authorList>
            <person name="Beres S.B."/>
            <person name="Richter E.W."/>
            <person name="Nagiec M.J."/>
            <person name="Sumby P."/>
            <person name="Porcella S.F."/>
            <person name="DeLeo F.R."/>
            <person name="Musser J.M."/>
        </authorList>
    </citation>
    <scope>NUCLEOTIDE SEQUENCE [LARGE SCALE GENOMIC DNA]</scope>
    <source>
        <strain>MGAS10270</strain>
    </source>
</reference>
<sequence length="162" mass="18142">MAELIIVYFSSKSNNTHRFVQKLGLPAQRIPVDNRPLEVSTHYLLIVPTYAAGGSDAKGAVPKQVIRFLNNPNNRKHCKGVISSGNTNFGDTFALAGPIISRKLQVPLLHQFELLGTATDVKKVQAIFARLKHHTHDKQKQTNNLITERTHPCHKPMRHTSH</sequence>
<feature type="chain" id="PRO_1000016532" description="Protein NrdI">
    <location>
        <begin position="1"/>
        <end position="162"/>
    </location>
</feature>
<name>NRDI_STRPD</name>
<comment type="function">
    <text evidence="1">Probably involved in ribonucleotide reductase function.</text>
</comment>
<comment type="similarity">
    <text evidence="1">Belongs to the NrdI family.</text>
</comment>
<protein>
    <recommendedName>
        <fullName evidence="1">Protein NrdI</fullName>
    </recommendedName>
</protein>
<accession>Q1JIB1</accession>
<evidence type="ECO:0000255" key="1">
    <source>
        <dbReference type="HAMAP-Rule" id="MF_00128"/>
    </source>
</evidence>
<gene>
    <name evidence="1" type="primary">nrdI</name>
    <name type="ordered locus">MGAS10270_Spy0347</name>
</gene>
<dbReference type="EMBL" id="CP000260">
    <property type="protein sequence ID" value="ABF33412.1"/>
    <property type="molecule type" value="Genomic_DNA"/>
</dbReference>
<dbReference type="SMR" id="Q1JIB1"/>
<dbReference type="KEGG" id="sph:MGAS10270_Spy0347"/>
<dbReference type="HOGENOM" id="CLU_114845_0_0_9"/>
<dbReference type="Proteomes" id="UP000002436">
    <property type="component" value="Chromosome"/>
</dbReference>
<dbReference type="GO" id="GO:0010181">
    <property type="term" value="F:FMN binding"/>
    <property type="evidence" value="ECO:0007669"/>
    <property type="project" value="InterPro"/>
</dbReference>
<dbReference type="GO" id="GO:0036211">
    <property type="term" value="P:protein modification process"/>
    <property type="evidence" value="ECO:0007669"/>
    <property type="project" value="InterPro"/>
</dbReference>
<dbReference type="Gene3D" id="3.40.50.360">
    <property type="match status" value="1"/>
</dbReference>
<dbReference type="HAMAP" id="MF_00128">
    <property type="entry name" value="NrdI"/>
    <property type="match status" value="1"/>
</dbReference>
<dbReference type="InterPro" id="IPR029039">
    <property type="entry name" value="Flavoprotein-like_sf"/>
</dbReference>
<dbReference type="InterPro" id="IPR020852">
    <property type="entry name" value="RNR_Ib_NrdI_bac"/>
</dbReference>
<dbReference type="InterPro" id="IPR004465">
    <property type="entry name" value="RNR_NrdI"/>
</dbReference>
<dbReference type="NCBIfam" id="TIGR00333">
    <property type="entry name" value="nrdI"/>
    <property type="match status" value="1"/>
</dbReference>
<dbReference type="PANTHER" id="PTHR37297">
    <property type="entry name" value="PROTEIN NRDI"/>
    <property type="match status" value="1"/>
</dbReference>
<dbReference type="PANTHER" id="PTHR37297:SF1">
    <property type="entry name" value="PROTEIN NRDI"/>
    <property type="match status" value="1"/>
</dbReference>
<dbReference type="Pfam" id="PF07972">
    <property type="entry name" value="Flavodoxin_NdrI"/>
    <property type="match status" value="1"/>
</dbReference>
<dbReference type="PIRSF" id="PIRSF005087">
    <property type="entry name" value="NrdI"/>
    <property type="match status" value="1"/>
</dbReference>
<dbReference type="SUPFAM" id="SSF52218">
    <property type="entry name" value="Flavoproteins"/>
    <property type="match status" value="1"/>
</dbReference>
<organism>
    <name type="scientific">Streptococcus pyogenes serotype M2 (strain MGAS10270)</name>
    <dbReference type="NCBI Taxonomy" id="370552"/>
    <lineage>
        <taxon>Bacteria</taxon>
        <taxon>Bacillati</taxon>
        <taxon>Bacillota</taxon>
        <taxon>Bacilli</taxon>
        <taxon>Lactobacillales</taxon>
        <taxon>Streptococcaceae</taxon>
        <taxon>Streptococcus</taxon>
    </lineage>
</organism>
<proteinExistence type="inferred from homology"/>